<accession>P57465</accession>
<reference key="1">
    <citation type="journal article" date="2000" name="Nature">
        <title>Genome sequence of the endocellular bacterial symbiont of aphids Buchnera sp. APS.</title>
        <authorList>
            <person name="Shigenobu S."/>
            <person name="Watanabe H."/>
            <person name="Hattori M."/>
            <person name="Sakaki Y."/>
            <person name="Ishikawa H."/>
        </authorList>
    </citation>
    <scope>NUCLEOTIDE SEQUENCE [LARGE SCALE GENOMIC DNA]</scope>
    <source>
        <strain>APS</strain>
    </source>
</reference>
<organism>
    <name type="scientific">Buchnera aphidicola subsp. Acyrthosiphon pisum (strain APS)</name>
    <name type="common">Acyrthosiphon pisum symbiotic bacterium</name>
    <dbReference type="NCBI Taxonomy" id="107806"/>
    <lineage>
        <taxon>Bacteria</taxon>
        <taxon>Pseudomonadati</taxon>
        <taxon>Pseudomonadota</taxon>
        <taxon>Gammaproteobacteria</taxon>
        <taxon>Enterobacterales</taxon>
        <taxon>Erwiniaceae</taxon>
        <taxon>Buchnera</taxon>
    </lineage>
</organism>
<comment type="similarity">
    <text evidence="1">Belongs to the BolA/IbaG family.</text>
</comment>
<keyword id="KW-1185">Reference proteome</keyword>
<dbReference type="EMBL" id="BA000003">
    <property type="protein sequence ID" value="BAB13088.1"/>
    <property type="molecule type" value="Genomic_DNA"/>
</dbReference>
<dbReference type="RefSeq" id="NP_240202.1">
    <property type="nucleotide sequence ID" value="NC_002528.1"/>
</dbReference>
<dbReference type="RefSeq" id="WP_009874342.1">
    <property type="nucleotide sequence ID" value="NZ_AP036055.1"/>
</dbReference>
<dbReference type="SMR" id="P57465"/>
<dbReference type="STRING" id="563178.BUAP5A_378"/>
<dbReference type="EnsemblBacteria" id="BAB13088">
    <property type="protein sequence ID" value="BAB13088"/>
    <property type="gene ID" value="BAB13088"/>
</dbReference>
<dbReference type="KEGG" id="buc:BU385"/>
<dbReference type="PATRIC" id="fig|107806.10.peg.399"/>
<dbReference type="eggNOG" id="COG5007">
    <property type="taxonomic scope" value="Bacteria"/>
</dbReference>
<dbReference type="HOGENOM" id="CLU_109462_4_1_6"/>
<dbReference type="BioCyc" id="BAPH107806:GBZJ-378-MONOMER"/>
<dbReference type="Proteomes" id="UP000001806">
    <property type="component" value="Chromosome"/>
</dbReference>
<dbReference type="Gene3D" id="3.30.300.90">
    <property type="entry name" value="BolA-like"/>
    <property type="match status" value="1"/>
</dbReference>
<dbReference type="InterPro" id="IPR002634">
    <property type="entry name" value="BolA"/>
</dbReference>
<dbReference type="InterPro" id="IPR036065">
    <property type="entry name" value="BolA-like_sf"/>
</dbReference>
<dbReference type="InterPro" id="IPR050961">
    <property type="entry name" value="BolA/IbaG_stress_morph_reg"/>
</dbReference>
<dbReference type="PANTHER" id="PTHR46229:SF4">
    <property type="entry name" value="ACID STRESS PROTEIN IBAG"/>
    <property type="match status" value="1"/>
</dbReference>
<dbReference type="PANTHER" id="PTHR46229">
    <property type="entry name" value="BOLA TRANSCRIPTION REGULATOR"/>
    <property type="match status" value="1"/>
</dbReference>
<dbReference type="Pfam" id="PF01722">
    <property type="entry name" value="BolA"/>
    <property type="match status" value="1"/>
</dbReference>
<dbReference type="PIRSF" id="PIRSF003113">
    <property type="entry name" value="BolA"/>
    <property type="match status" value="1"/>
</dbReference>
<dbReference type="SUPFAM" id="SSF82657">
    <property type="entry name" value="BolA-like"/>
    <property type="match status" value="1"/>
</dbReference>
<sequence length="80" mass="9299">MDNQEIKLLLIKKLNLEQANITGDSNHIKIIAIGNIFKNVSQVKRQQIIYAPLIDMIKEKHIHAVSIMSYTPEEWEKTKK</sequence>
<gene>
    <name type="ordered locus">BU385</name>
</gene>
<feature type="chain" id="PRO_0000201224" description="Uncharacterized protein BU385">
    <location>
        <begin position="1"/>
        <end position="80"/>
    </location>
</feature>
<protein>
    <recommendedName>
        <fullName>Uncharacterized protein BU385</fullName>
    </recommendedName>
</protein>
<proteinExistence type="inferred from homology"/>
<evidence type="ECO:0000305" key="1"/>
<name>Y385_BUCAI</name>